<keyword id="KW-0131">Cell cycle</keyword>
<keyword id="KW-0227">DNA damage</keyword>
<keyword id="KW-0236">DNA replication inhibitor</keyword>
<keyword id="KW-0539">Nucleus</keyword>
<keyword id="KW-1185">Reference proteome</keyword>
<name>SWI3_SCHPO</name>
<accession>O14350</accession>
<accession>Q6IUU5</accession>
<dbReference type="EMBL" id="AY498547">
    <property type="protein sequence ID" value="AAS77252.1"/>
    <property type="molecule type" value="mRNA"/>
</dbReference>
<dbReference type="EMBL" id="AY623652">
    <property type="protein sequence ID" value="AAT44735.1"/>
    <property type="molecule type" value="Genomic_DNA"/>
</dbReference>
<dbReference type="EMBL" id="CU329671">
    <property type="protein sequence ID" value="CAH17997.1"/>
    <property type="molecule type" value="Genomic_DNA"/>
</dbReference>
<dbReference type="PIR" id="T40192">
    <property type="entry name" value="T40192"/>
</dbReference>
<dbReference type="RefSeq" id="NP_001018832.1">
    <property type="nucleotide sequence ID" value="NM_001022202.2"/>
</dbReference>
<dbReference type="SMR" id="O14350"/>
<dbReference type="BioGRID" id="280399">
    <property type="interactions" value="113"/>
</dbReference>
<dbReference type="FunCoup" id="O14350">
    <property type="interactions" value="12"/>
</dbReference>
<dbReference type="IntAct" id="O14350">
    <property type="interactions" value="1"/>
</dbReference>
<dbReference type="STRING" id="284812.O14350"/>
<dbReference type="iPTMnet" id="O14350"/>
<dbReference type="PaxDb" id="4896-SPBC30D10.04.1"/>
<dbReference type="EnsemblFungi" id="SPBC30D10.04.1">
    <property type="protein sequence ID" value="SPBC30D10.04.1:pep"/>
    <property type="gene ID" value="SPBC30D10.04"/>
</dbReference>
<dbReference type="GeneID" id="3361323"/>
<dbReference type="KEGG" id="spo:3361323"/>
<dbReference type="PomBase" id="SPBC30D10.04">
    <property type="gene designation" value="swi3"/>
</dbReference>
<dbReference type="VEuPathDB" id="FungiDB:SPBC30D10.04"/>
<dbReference type="eggNOG" id="KOG3004">
    <property type="taxonomic scope" value="Eukaryota"/>
</dbReference>
<dbReference type="HOGENOM" id="CLU_1435204_0_0_1"/>
<dbReference type="InParanoid" id="O14350"/>
<dbReference type="OMA" id="WINEIAV"/>
<dbReference type="PhylomeDB" id="O14350"/>
<dbReference type="PRO" id="PR:O14350"/>
<dbReference type="Proteomes" id="UP000002485">
    <property type="component" value="Chromosome II"/>
</dbReference>
<dbReference type="GO" id="GO:0000785">
    <property type="term" value="C:chromatin"/>
    <property type="evidence" value="ECO:0000314"/>
    <property type="project" value="PomBase"/>
</dbReference>
<dbReference type="GO" id="GO:0005739">
    <property type="term" value="C:mitochondrion"/>
    <property type="evidence" value="ECO:0007005"/>
    <property type="project" value="PomBase"/>
</dbReference>
<dbReference type="GO" id="GO:0005634">
    <property type="term" value="C:nucleus"/>
    <property type="evidence" value="ECO:0000314"/>
    <property type="project" value="UniProtKB"/>
</dbReference>
<dbReference type="GO" id="GO:0031298">
    <property type="term" value="C:replication fork protection complex"/>
    <property type="evidence" value="ECO:0000314"/>
    <property type="project" value="PomBase"/>
</dbReference>
<dbReference type="GO" id="GO:0003677">
    <property type="term" value="F:DNA binding"/>
    <property type="evidence" value="ECO:0000314"/>
    <property type="project" value="PomBase"/>
</dbReference>
<dbReference type="GO" id="GO:0003690">
    <property type="term" value="F:double-stranded DNA binding"/>
    <property type="evidence" value="ECO:0000314"/>
    <property type="project" value="PomBase"/>
</dbReference>
<dbReference type="GO" id="GO:0000403">
    <property type="term" value="F:Y-form DNA binding"/>
    <property type="evidence" value="ECO:0000314"/>
    <property type="project" value="PomBase"/>
</dbReference>
<dbReference type="GO" id="GO:0006974">
    <property type="term" value="P:DNA damage response"/>
    <property type="evidence" value="ECO:0007669"/>
    <property type="project" value="UniProtKB-KW"/>
</dbReference>
<dbReference type="GO" id="GO:0000076">
    <property type="term" value="P:DNA replication checkpoint signaling"/>
    <property type="evidence" value="ECO:0000318"/>
    <property type="project" value="GO_Central"/>
</dbReference>
<dbReference type="GO" id="GO:0007534">
    <property type="term" value="P:gene conversion at mating-type locus"/>
    <property type="evidence" value="ECO:0000315"/>
    <property type="project" value="PomBase"/>
</dbReference>
<dbReference type="GO" id="GO:0071515">
    <property type="term" value="P:mating-type locus imprinting"/>
    <property type="evidence" value="ECO:0000315"/>
    <property type="project" value="PomBase"/>
</dbReference>
<dbReference type="GO" id="GO:0043111">
    <property type="term" value="P:replication fork arrest"/>
    <property type="evidence" value="ECO:0000315"/>
    <property type="project" value="UniProtKB"/>
</dbReference>
<dbReference type="GO" id="GO:0011000">
    <property type="term" value="P:replication fork arrest at mating type locus"/>
    <property type="evidence" value="ECO:0000314"/>
    <property type="project" value="PomBase"/>
</dbReference>
<dbReference type="GO" id="GO:0031297">
    <property type="term" value="P:replication fork processing"/>
    <property type="evidence" value="ECO:0007669"/>
    <property type="project" value="InterPro"/>
</dbReference>
<dbReference type="InterPro" id="IPR012923">
    <property type="entry name" value="Csm3"/>
</dbReference>
<dbReference type="InterPro" id="IPR040038">
    <property type="entry name" value="TIPIN/Csm3/Swi3"/>
</dbReference>
<dbReference type="PANTHER" id="PTHR13220">
    <property type="entry name" value="TIMELESS INTERACTING-RELATED"/>
    <property type="match status" value="1"/>
</dbReference>
<dbReference type="PANTHER" id="PTHR13220:SF11">
    <property type="entry name" value="TIMELESS-INTERACTING PROTEIN"/>
    <property type="match status" value="1"/>
</dbReference>
<dbReference type="Pfam" id="PF07962">
    <property type="entry name" value="Swi3"/>
    <property type="match status" value="1"/>
</dbReference>
<organism>
    <name type="scientific">Schizosaccharomyces pombe (strain 972 / ATCC 24843)</name>
    <name type="common">Fission yeast</name>
    <dbReference type="NCBI Taxonomy" id="284812"/>
    <lineage>
        <taxon>Eukaryota</taxon>
        <taxon>Fungi</taxon>
        <taxon>Dikarya</taxon>
        <taxon>Ascomycota</taxon>
        <taxon>Taphrinomycotina</taxon>
        <taxon>Schizosaccharomycetes</taxon>
        <taxon>Schizosaccharomycetales</taxon>
        <taxon>Schizosaccharomycetaceae</taxon>
        <taxon>Schizosaccharomyces</taxon>
    </lineage>
</organism>
<gene>
    <name type="primary">swi3</name>
    <name type="ORF">SPBC30D10.04</name>
</gene>
<comment type="function">
    <text evidence="2 3">Forms a fork protection complex (FPC) with swi1. FPC coordinates leading and lagging strand synthesis and moves with the replication fork. It is required for programmed fork-pausing which is necessary for mating-type switching. FPC stabilizes replication forks in a configuration that is recognized by replication checkpoint sensors. It is involved in termination at the mat1-proximal polar-terminator of replication (RTS1) and also required for activation of the Rad53-like checkpoint kinase cds1.</text>
</comment>
<comment type="subunit">
    <text evidence="2 3">Fork protection complex (FPC) consisting of swi1 and swi3 interacts with mat1 cis-acting sequences and mat1-proximal polar-terminator of replication (RTS1).</text>
</comment>
<comment type="interaction">
    <interactant intactId="EBI-465952">
        <id>O14350</id>
    </interactant>
    <interactant intactId="EBI-465942">
        <id>Q9UUM2</id>
        <label>swi1</label>
    </interactant>
    <organismsDiffer>false</organismsDiffer>
    <experiments>5</experiments>
</comment>
<comment type="subcellular location">
    <subcellularLocation>
        <location evidence="2">Nucleus</location>
    </subcellularLocation>
    <text>Nuclear throughout the cell cycle. Associated with chromatin during S phase.</text>
</comment>
<comment type="similarity">
    <text evidence="4">Belongs to the CSM3 family.</text>
</comment>
<feature type="chain" id="PRO_0000072350" description="Swi1-interacting protein swi3">
    <location>
        <begin position="1"/>
        <end position="181"/>
    </location>
</feature>
<feature type="region of interest" description="Disordered" evidence="1">
    <location>
        <begin position="1"/>
        <end position="47"/>
    </location>
</feature>
<feature type="compositionally biased region" description="Basic and acidic residues" evidence="1">
    <location>
        <begin position="9"/>
        <end position="27"/>
    </location>
</feature>
<feature type="compositionally biased region" description="Acidic residues" evidence="1">
    <location>
        <begin position="28"/>
        <end position="39"/>
    </location>
</feature>
<reference key="1">
    <citation type="journal article" date="2004" name="Mol. Cell. Biol.">
        <title>Swi1 and swi3 are components of a replication fork protection complex in fission yeast.</title>
        <authorList>
            <person name="Noguchi E."/>
            <person name="Noguchi C."/>
            <person name="McDonald W.H."/>
            <person name="Yates J.R. III"/>
            <person name="Russell P."/>
        </authorList>
    </citation>
    <scope>NUCLEOTIDE SEQUENCE [MRNA]</scope>
    <scope>FUNCTION</scope>
    <scope>INTERACTION WITH SWI1</scope>
    <scope>SUBCELLULAR LOCATION</scope>
</reference>
<reference key="2">
    <citation type="journal article" date="2004" name="Mol. Cell. Biol.">
        <title>Biochemical interactions between proteins and mat1 cis-acting sequences required for imprinting in fission yeast.</title>
        <authorList>
            <person name="Lee B.-S."/>
            <person name="Grewal S.I.S."/>
            <person name="Klar A.J.S."/>
        </authorList>
    </citation>
    <scope>NUCLEOTIDE SEQUENCE [GENOMIC DNA]</scope>
    <scope>FUNCTION</scope>
    <scope>INTERACTION WITH SWI1</scope>
</reference>
<reference key="3">
    <citation type="journal article" date="2002" name="Nature">
        <title>The genome sequence of Schizosaccharomyces pombe.</title>
        <authorList>
            <person name="Wood V."/>
            <person name="Gwilliam R."/>
            <person name="Rajandream M.A."/>
            <person name="Lyne M.H."/>
            <person name="Lyne R."/>
            <person name="Stewart A."/>
            <person name="Sgouros J.G."/>
            <person name="Peat N."/>
            <person name="Hayles J."/>
            <person name="Baker S.G."/>
            <person name="Basham D."/>
            <person name="Bowman S."/>
            <person name="Brooks K."/>
            <person name="Brown D."/>
            <person name="Brown S."/>
            <person name="Chillingworth T."/>
            <person name="Churcher C.M."/>
            <person name="Collins M."/>
            <person name="Connor R."/>
            <person name="Cronin A."/>
            <person name="Davis P."/>
            <person name="Feltwell T."/>
            <person name="Fraser A."/>
            <person name="Gentles S."/>
            <person name="Goble A."/>
            <person name="Hamlin N."/>
            <person name="Harris D.E."/>
            <person name="Hidalgo J."/>
            <person name="Hodgson G."/>
            <person name="Holroyd S."/>
            <person name="Hornsby T."/>
            <person name="Howarth S."/>
            <person name="Huckle E.J."/>
            <person name="Hunt S."/>
            <person name="Jagels K."/>
            <person name="James K.D."/>
            <person name="Jones L."/>
            <person name="Jones M."/>
            <person name="Leather S."/>
            <person name="McDonald S."/>
            <person name="McLean J."/>
            <person name="Mooney P."/>
            <person name="Moule S."/>
            <person name="Mungall K.L."/>
            <person name="Murphy L.D."/>
            <person name="Niblett D."/>
            <person name="Odell C."/>
            <person name="Oliver K."/>
            <person name="O'Neil S."/>
            <person name="Pearson D."/>
            <person name="Quail M.A."/>
            <person name="Rabbinowitsch E."/>
            <person name="Rutherford K.M."/>
            <person name="Rutter S."/>
            <person name="Saunders D."/>
            <person name="Seeger K."/>
            <person name="Sharp S."/>
            <person name="Skelton J."/>
            <person name="Simmonds M.N."/>
            <person name="Squares R."/>
            <person name="Squares S."/>
            <person name="Stevens K."/>
            <person name="Taylor K."/>
            <person name="Taylor R.G."/>
            <person name="Tivey A."/>
            <person name="Walsh S.V."/>
            <person name="Warren T."/>
            <person name="Whitehead S."/>
            <person name="Woodward J.R."/>
            <person name="Volckaert G."/>
            <person name="Aert R."/>
            <person name="Robben J."/>
            <person name="Grymonprez B."/>
            <person name="Weltjens I."/>
            <person name="Vanstreels E."/>
            <person name="Rieger M."/>
            <person name="Schaefer M."/>
            <person name="Mueller-Auer S."/>
            <person name="Gabel C."/>
            <person name="Fuchs M."/>
            <person name="Duesterhoeft A."/>
            <person name="Fritzc C."/>
            <person name="Holzer E."/>
            <person name="Moestl D."/>
            <person name="Hilbert H."/>
            <person name="Borzym K."/>
            <person name="Langer I."/>
            <person name="Beck A."/>
            <person name="Lehrach H."/>
            <person name="Reinhardt R."/>
            <person name="Pohl T.M."/>
            <person name="Eger P."/>
            <person name="Zimmermann W."/>
            <person name="Wedler H."/>
            <person name="Wambutt R."/>
            <person name="Purnelle B."/>
            <person name="Goffeau A."/>
            <person name="Cadieu E."/>
            <person name="Dreano S."/>
            <person name="Gloux S."/>
            <person name="Lelaure V."/>
            <person name="Mottier S."/>
            <person name="Galibert F."/>
            <person name="Aves S.J."/>
            <person name="Xiang Z."/>
            <person name="Hunt C."/>
            <person name="Moore K."/>
            <person name="Hurst S.M."/>
            <person name="Lucas M."/>
            <person name="Rochet M."/>
            <person name="Gaillardin C."/>
            <person name="Tallada V.A."/>
            <person name="Garzon A."/>
            <person name="Thode G."/>
            <person name="Daga R.R."/>
            <person name="Cruzado L."/>
            <person name="Jimenez J."/>
            <person name="Sanchez M."/>
            <person name="del Rey F."/>
            <person name="Benito J."/>
            <person name="Dominguez A."/>
            <person name="Revuelta J.L."/>
            <person name="Moreno S."/>
            <person name="Armstrong J."/>
            <person name="Forsburg S.L."/>
            <person name="Cerutti L."/>
            <person name="Lowe T."/>
            <person name="McCombie W.R."/>
            <person name="Paulsen I."/>
            <person name="Potashkin J."/>
            <person name="Shpakovski G.V."/>
            <person name="Ussery D."/>
            <person name="Barrell B.G."/>
            <person name="Nurse P."/>
        </authorList>
    </citation>
    <scope>NUCLEOTIDE SEQUENCE [LARGE SCALE GENOMIC DNA]</scope>
    <source>
        <strain>972 / ATCC 24843</strain>
    </source>
</reference>
<reference key="4">
    <citation type="submission" date="2004-08" db="EMBL/GenBank/DDBJ databases">
        <authorList>
            <person name="Wood V."/>
            <person name="Rajandream M.A."/>
            <person name="Barrell B.G."/>
            <person name="Lauber J."/>
            <person name="Hilbert H."/>
            <person name="Duesterhoeft A."/>
        </authorList>
    </citation>
    <scope>SEQUENCE REVISION TO N-TERMINUS</scope>
</reference>
<protein>
    <recommendedName>
        <fullName>Swi1-interacting protein swi3</fullName>
    </recommendedName>
    <alternativeName>
        <fullName>Replication fork protection complex subunit swi3</fullName>
    </alternativeName>
</protein>
<evidence type="ECO:0000256" key="1">
    <source>
        <dbReference type="SAM" id="MobiDB-lite"/>
    </source>
</evidence>
<evidence type="ECO:0000269" key="2">
    <source>
    </source>
</evidence>
<evidence type="ECO:0000269" key="3">
    <source>
    </source>
</evidence>
<evidence type="ECO:0000305" key="4"/>
<proteinExistence type="evidence at protein level"/>
<sequence length="181" mass="20581">MSTAASDSGVEKLVEENKREEVKKNEEEKEFDLGLEENPDSVKKPRKRLAKFDEERLISENGIPKLRKMMRKVKLKGKGHEAKDLKQLLGMYHIWTHELYPRATFDDSISYLKTLGKHRSVKVRRRGWINEIAVENGSDSNASLFTGPSSNSLVNLTSGDPYVQDTADDAFVAQDNDTQLE</sequence>